<protein>
    <recommendedName>
        <fullName>Phospholipase A2, membrane associated</fullName>
        <ecNumber evidence="2">3.1.1.4</ecNumber>
    </recommendedName>
    <alternativeName>
        <fullName>GIIC sPLA2</fullName>
    </alternativeName>
    <alternativeName>
        <fullName>Group IIA phospholipase A2</fullName>
    </alternativeName>
    <alternativeName>
        <fullName>Phosphatidylcholine 2-acylhydrolase 2A</fullName>
    </alternativeName>
</protein>
<evidence type="ECO:0000250" key="1"/>
<evidence type="ECO:0000250" key="2">
    <source>
        <dbReference type="UniProtKB" id="P14555"/>
    </source>
</evidence>
<evidence type="ECO:0000250" key="3">
    <source>
        <dbReference type="UniProtKB" id="P31482"/>
    </source>
</evidence>
<evidence type="ECO:0000255" key="4"/>
<evidence type="ECO:0000255" key="5">
    <source>
        <dbReference type="PROSITE-ProRule" id="PRU10035"/>
    </source>
</evidence>
<evidence type="ECO:0000255" key="6">
    <source>
        <dbReference type="PROSITE-ProRule" id="PRU10036"/>
    </source>
</evidence>
<evidence type="ECO:0000269" key="7">
    <source>
    </source>
</evidence>
<evidence type="ECO:0000305" key="8"/>
<proteinExistence type="evidence at transcript level"/>
<dbReference type="EC" id="3.1.1.4" evidence="2"/>
<dbReference type="EMBL" id="X82631">
    <property type="protein sequence ID" value="CAA57953.1"/>
    <property type="molecule type" value="mRNA"/>
</dbReference>
<dbReference type="PIR" id="I48093">
    <property type="entry name" value="I48093"/>
</dbReference>
<dbReference type="RefSeq" id="NP_001166471.1">
    <property type="nucleotide sequence ID" value="NM_001173000.1"/>
</dbReference>
<dbReference type="SMR" id="P47711"/>
<dbReference type="FunCoup" id="P47711">
    <property type="interactions" value="462"/>
</dbReference>
<dbReference type="STRING" id="10141.ENSCPOP00000000168"/>
<dbReference type="Ensembl" id="ENSCPOT00000000194.3">
    <property type="protein sequence ID" value="ENSCPOP00000000168.2"/>
    <property type="gene ID" value="ENSCPOG00000000191.4"/>
</dbReference>
<dbReference type="GeneID" id="100135599"/>
<dbReference type="KEGG" id="cpoc:100135599"/>
<dbReference type="CTD" id="5320"/>
<dbReference type="VEuPathDB" id="HostDB:ENSCPOG00000000191"/>
<dbReference type="eggNOG" id="KOG4087">
    <property type="taxonomic scope" value="Eukaryota"/>
</dbReference>
<dbReference type="GeneTree" id="ENSGT00940000155096"/>
<dbReference type="HOGENOM" id="CLU_090683_3_0_1"/>
<dbReference type="InParanoid" id="P47711"/>
<dbReference type="OMA" id="GDQDYCK"/>
<dbReference type="OrthoDB" id="5841574at2759"/>
<dbReference type="TreeFam" id="TF319283"/>
<dbReference type="Proteomes" id="UP000005447">
    <property type="component" value="Unassembled WGS sequence"/>
</dbReference>
<dbReference type="Bgee" id="ENSCPOG00000000191">
    <property type="expression patterns" value="Expressed in ovary and 2 other cell types or tissues"/>
</dbReference>
<dbReference type="GO" id="GO:0005576">
    <property type="term" value="C:extracellular region"/>
    <property type="evidence" value="ECO:0007669"/>
    <property type="project" value="UniProtKB-SubCell"/>
</dbReference>
<dbReference type="GO" id="GO:0005741">
    <property type="term" value="C:mitochondrial outer membrane"/>
    <property type="evidence" value="ECO:0007669"/>
    <property type="project" value="UniProtKB-SubCell"/>
</dbReference>
<dbReference type="GO" id="GO:0005886">
    <property type="term" value="C:plasma membrane"/>
    <property type="evidence" value="ECO:0007669"/>
    <property type="project" value="UniProtKB-SubCell"/>
</dbReference>
<dbReference type="GO" id="GO:0005509">
    <property type="term" value="F:calcium ion binding"/>
    <property type="evidence" value="ECO:0007669"/>
    <property type="project" value="InterPro"/>
</dbReference>
<dbReference type="GO" id="GO:0047498">
    <property type="term" value="F:calcium-dependent phospholipase A2 activity"/>
    <property type="evidence" value="ECO:0000250"/>
    <property type="project" value="UniProtKB"/>
</dbReference>
<dbReference type="GO" id="GO:0005543">
    <property type="term" value="F:phospholipid binding"/>
    <property type="evidence" value="ECO:0007669"/>
    <property type="project" value="TreeGrafter"/>
</dbReference>
<dbReference type="GO" id="GO:0050482">
    <property type="term" value="P:arachidonate secretion"/>
    <property type="evidence" value="ECO:0007669"/>
    <property type="project" value="InterPro"/>
</dbReference>
<dbReference type="GO" id="GO:0050830">
    <property type="term" value="P:defense response to Gram-positive bacterium"/>
    <property type="evidence" value="ECO:0000250"/>
    <property type="project" value="UniProtKB"/>
</dbReference>
<dbReference type="GO" id="GO:0006954">
    <property type="term" value="P:inflammatory response"/>
    <property type="evidence" value="ECO:0007669"/>
    <property type="project" value="UniProtKB-KW"/>
</dbReference>
<dbReference type="GO" id="GO:0036335">
    <property type="term" value="P:intestinal stem cell homeostasis"/>
    <property type="evidence" value="ECO:0000250"/>
    <property type="project" value="UniProtKB"/>
</dbReference>
<dbReference type="GO" id="GO:0031640">
    <property type="term" value="P:killing of cells of another organism"/>
    <property type="evidence" value="ECO:0007669"/>
    <property type="project" value="UniProtKB-KW"/>
</dbReference>
<dbReference type="GO" id="GO:0016042">
    <property type="term" value="P:lipid catabolic process"/>
    <property type="evidence" value="ECO:0007669"/>
    <property type="project" value="UniProtKB-KW"/>
</dbReference>
<dbReference type="GO" id="GO:0042130">
    <property type="term" value="P:negative regulation of T cell proliferation"/>
    <property type="evidence" value="ECO:0007669"/>
    <property type="project" value="TreeGrafter"/>
</dbReference>
<dbReference type="GO" id="GO:0046470">
    <property type="term" value="P:phosphatidylcholine metabolic process"/>
    <property type="evidence" value="ECO:0000250"/>
    <property type="project" value="UniProtKB"/>
</dbReference>
<dbReference type="GO" id="GO:0046337">
    <property type="term" value="P:phosphatidylethanolamine metabolic process"/>
    <property type="evidence" value="ECO:0000250"/>
    <property type="project" value="UniProtKB"/>
</dbReference>
<dbReference type="GO" id="GO:1902563">
    <property type="term" value="P:regulation of neutrophil activation"/>
    <property type="evidence" value="ECO:0000250"/>
    <property type="project" value="UniProtKB"/>
</dbReference>
<dbReference type="CDD" id="cd00125">
    <property type="entry name" value="PLA2c"/>
    <property type="match status" value="1"/>
</dbReference>
<dbReference type="FunFam" id="1.20.90.10:FF:000001">
    <property type="entry name" value="Basic phospholipase A2 homolog"/>
    <property type="match status" value="1"/>
</dbReference>
<dbReference type="Gene3D" id="1.20.90.10">
    <property type="entry name" value="Phospholipase A2 domain"/>
    <property type="match status" value="1"/>
</dbReference>
<dbReference type="InterPro" id="IPR001211">
    <property type="entry name" value="PLipase_A2"/>
</dbReference>
<dbReference type="InterPro" id="IPR033112">
    <property type="entry name" value="PLipase_A2_Asp_AS"/>
</dbReference>
<dbReference type="InterPro" id="IPR016090">
    <property type="entry name" value="PLipase_A2_dom"/>
</dbReference>
<dbReference type="InterPro" id="IPR036444">
    <property type="entry name" value="PLipase_A2_dom_sf"/>
</dbReference>
<dbReference type="InterPro" id="IPR033113">
    <property type="entry name" value="PLipase_A2_His_AS"/>
</dbReference>
<dbReference type="PANTHER" id="PTHR11716">
    <property type="entry name" value="PHOSPHOLIPASE A2 FAMILY MEMBER"/>
    <property type="match status" value="1"/>
</dbReference>
<dbReference type="PANTHER" id="PTHR11716:SF9">
    <property type="entry name" value="PHOSPHOLIPASE A2, MEMBRANE ASSOCIATED"/>
    <property type="match status" value="1"/>
</dbReference>
<dbReference type="Pfam" id="PF00068">
    <property type="entry name" value="Phospholip_A2_1"/>
    <property type="match status" value="1"/>
</dbReference>
<dbReference type="PRINTS" id="PR00389">
    <property type="entry name" value="PHPHLIPASEA2"/>
</dbReference>
<dbReference type="SMART" id="SM00085">
    <property type="entry name" value="PA2c"/>
    <property type="match status" value="1"/>
</dbReference>
<dbReference type="SUPFAM" id="SSF48619">
    <property type="entry name" value="Phospholipase A2, PLA2"/>
    <property type="match status" value="1"/>
</dbReference>
<dbReference type="PROSITE" id="PS00119">
    <property type="entry name" value="PA2_ASP"/>
    <property type="match status" value="1"/>
</dbReference>
<dbReference type="PROSITE" id="PS00118">
    <property type="entry name" value="PA2_HIS"/>
    <property type="match status" value="1"/>
</dbReference>
<feature type="signal peptide" evidence="4">
    <location>
        <begin position="1"/>
        <end position="20"/>
    </location>
</feature>
<feature type="chain" id="PRO_0000022749" description="Phospholipase A2, membrane associated">
    <location>
        <begin position="21"/>
        <end position="145"/>
    </location>
</feature>
<feature type="active site" evidence="1">
    <location>
        <position position="67"/>
    </location>
</feature>
<feature type="active site" evidence="1">
    <location>
        <position position="112"/>
    </location>
</feature>
<feature type="binding site" evidence="2">
    <location>
        <position position="47"/>
    </location>
    <ligand>
        <name>Ca(2+)</name>
        <dbReference type="ChEBI" id="CHEBI:29108"/>
    </ligand>
</feature>
<feature type="binding site" evidence="2">
    <location>
        <position position="49"/>
    </location>
    <ligand>
        <name>Ca(2+)</name>
        <dbReference type="ChEBI" id="CHEBI:29108"/>
    </ligand>
</feature>
<feature type="binding site" evidence="2">
    <location>
        <position position="51"/>
    </location>
    <ligand>
        <name>Ca(2+)</name>
        <dbReference type="ChEBI" id="CHEBI:29108"/>
    </ligand>
</feature>
<feature type="binding site" evidence="2">
    <location>
        <position position="68"/>
    </location>
    <ligand>
        <name>Ca(2+)</name>
        <dbReference type="ChEBI" id="CHEBI:29108"/>
    </ligand>
</feature>
<feature type="disulfide bond" evidence="2">
    <location>
        <begin position="46"/>
        <end position="138"/>
    </location>
</feature>
<feature type="disulfide bond" evidence="2">
    <location>
        <begin position="48"/>
        <end position="64"/>
    </location>
</feature>
<feature type="disulfide bond" evidence="2">
    <location>
        <begin position="63"/>
        <end position="118"/>
    </location>
</feature>
<feature type="disulfide bond" evidence="2">
    <location>
        <begin position="69"/>
        <end position="145"/>
    </location>
</feature>
<feature type="disulfide bond" evidence="2">
    <location>
        <begin position="70"/>
        <end position="111"/>
    </location>
</feature>
<feature type="disulfide bond" evidence="2">
    <location>
        <begin position="79"/>
        <end position="104"/>
    </location>
</feature>
<feature type="disulfide bond" evidence="2">
    <location>
        <begin position="97"/>
        <end position="109"/>
    </location>
</feature>
<sequence>MKLLLLLLVVMASDLPQAHGHLKQFTEMIKLTTGKNGLTSYGAYGCHCGVGGKGTPKDATDRCCVRHDCCYDRLMKRGCGTKFLNYRFTHKGSSITCSVKQNSCQKQLCECDKAAAYCFAANLKSYSRRYQFYYNGLCRGKTPSC</sequence>
<reference key="1">
    <citation type="journal article" date="1995" name="J. Biol. Chem.">
        <title>Expression of the type-II phospholipase A2 in alveolar macrophages. Down-regulation by an inflammatory signal.</title>
        <authorList>
            <person name="Vial D."/>
            <person name="Senorale-Pose M."/>
            <person name="Havet N."/>
            <person name="Molio L."/>
            <person name="Vargaftig B.B."/>
            <person name="Touqui L."/>
        </authorList>
    </citation>
    <scope>NUCLEOTIDE SEQUENCE [MRNA]</scope>
    <scope>TISSUE SPECIFICITY</scope>
    <source>
        <strain>Hartley</strain>
        <tissue>Macrophage</tissue>
    </source>
</reference>
<comment type="function">
    <text evidence="2 3">Secretory calcium-dependent phospholipase A2 that primarily targets extracellular phospholipids with implications in host antimicrobial defense, inflammatory response and tissue regeneration (By similarity). Hydrolyzes the ester bond of the fatty acyl group attached at sn-2 position of phospholipids (phospholipase A2 activity) with preference for phosphatidylethanolamines and phosphatidylglycerols over phosphatidylcholines (By similarity). Contributes to lipid remodeling of cellular membranes and generation of lipid mediators involved in pathogen clearance. Displays bactericidal activity against Gram-positive bacteria by directly hydrolyzing phospholipids of the bacterial membrane. Upon sterile inflammation, targets membrane phospholipids of extracellular mitochondria released from activated platelets, generating free unsaturated fatty acids such as arachidonate that is used by neighboring leukocytes to synthesize inflammatory eicosanoids such as leukotrienes. Simultaneously, by compromising mitochondrial membrane integrity, promotes the release in circulation of potent damage-associated molecular pattern molecules that activate the innate immune response (By similarity). Plays a stem cell regulator role in the intestinal crypt. Within intracellular compartment mediates Paneth cell differentiation and its stem cell supporting functions by inhibiting Wnt signaling pathway in intestinal stem cell (ICS). Secreted in the intestinal lumen upon inflammation, acts in an autocrine way and promotes prostaglandin E2 synthesis that stimulates Wnt signaling pathway in ICS cells and tissue regeneration (By similarity). May play a role in the biosynthesis of N-acyl ethanolamines that regulate energy metabolism and inflammation. Hydrolyzes N-acyl phosphatidylethanolamines to N-acyl lysophosphatidylethanolamines, which are further cleaved by a lysophospholipase D to release N-acyl ethanolamines. Independent of its catalytic activity, acts as a ligand for integrins. Binds to and activates integrins ITGAV:ITGB3, ITGA4:ITGB1 and ITGA5:ITGB1. Binds to a site (site 2) which is distinct from the classical ligand-binding site (site 1) and induces integrin conformational changes and enhanced ligand binding to site 1. Induces cell proliferation in an integrin-dependent manner (By similarity).</text>
</comment>
<comment type="catalytic activity">
    <reaction evidence="2">
        <text>a 1,2-diacyl-sn-glycero-3-phosphoethanolamine + H2O = a 1-acyl-sn-glycero-3-phosphoethanolamine + a fatty acid + H(+)</text>
        <dbReference type="Rhea" id="RHEA:44604"/>
        <dbReference type="ChEBI" id="CHEBI:15377"/>
        <dbReference type="ChEBI" id="CHEBI:15378"/>
        <dbReference type="ChEBI" id="CHEBI:28868"/>
        <dbReference type="ChEBI" id="CHEBI:64381"/>
        <dbReference type="ChEBI" id="CHEBI:64612"/>
    </reaction>
    <physiologicalReaction direction="left-to-right" evidence="2">
        <dbReference type="Rhea" id="RHEA:44605"/>
    </physiologicalReaction>
</comment>
<comment type="catalytic activity">
    <reaction evidence="2">
        <text>1-hexadecanoyl-2-(9Z-octadecenoyl)-sn-glycero-3-phosphoethanolamine + H2O = 1-hexadecanoyl-sn-glycero-3-phosphoethanolamine + (9Z)-octadecenoate + H(+)</text>
        <dbReference type="Rhea" id="RHEA:40911"/>
        <dbReference type="ChEBI" id="CHEBI:15377"/>
        <dbReference type="ChEBI" id="CHEBI:15378"/>
        <dbReference type="ChEBI" id="CHEBI:30823"/>
        <dbReference type="ChEBI" id="CHEBI:73004"/>
        <dbReference type="ChEBI" id="CHEBI:73007"/>
    </reaction>
    <physiologicalReaction direction="left-to-right" evidence="2">
        <dbReference type="Rhea" id="RHEA:40912"/>
    </physiologicalReaction>
</comment>
<comment type="catalytic activity">
    <reaction evidence="2">
        <text>1-hexadecanoyl-2-(9Z,12Z-octadecadienoyl)-sn-glycero-3-phosphoethanolamine + H2O = 1-hexadecanoyl-sn-glycero-3-phosphoethanolamine + (9Z,12Z)-octadecadienoate + H(+)</text>
        <dbReference type="Rhea" id="RHEA:40815"/>
        <dbReference type="ChEBI" id="CHEBI:15377"/>
        <dbReference type="ChEBI" id="CHEBI:15378"/>
        <dbReference type="ChEBI" id="CHEBI:30245"/>
        <dbReference type="ChEBI" id="CHEBI:73004"/>
        <dbReference type="ChEBI" id="CHEBI:73008"/>
    </reaction>
    <physiologicalReaction direction="left-to-right" evidence="2">
        <dbReference type="Rhea" id="RHEA:40816"/>
    </physiologicalReaction>
</comment>
<comment type="catalytic activity">
    <reaction evidence="2">
        <text>1-hexadecanoyl-2-(5Z,8Z,11Z,14Z-eicosatetraenoyl)-sn-glycero-3-phosphoethanolamine + H2O = 1-hexadecanoyl-sn-glycero-3-phosphoethanolamine + (5Z,8Z,11Z,14Z)-eicosatetraenoate + H(+)</text>
        <dbReference type="Rhea" id="RHEA:40431"/>
        <dbReference type="ChEBI" id="CHEBI:15377"/>
        <dbReference type="ChEBI" id="CHEBI:15378"/>
        <dbReference type="ChEBI" id="CHEBI:32395"/>
        <dbReference type="ChEBI" id="CHEBI:73004"/>
        <dbReference type="ChEBI" id="CHEBI:73009"/>
    </reaction>
    <physiologicalReaction direction="left-to-right" evidence="2">
        <dbReference type="Rhea" id="RHEA:40432"/>
    </physiologicalReaction>
</comment>
<comment type="catalytic activity">
    <reaction evidence="2">
        <text>N-hexadecanoyl-1,2-di-(9Z-octadecenoyl)-sn-glycero-3-phosphoethanolamine + H2O = N-hexadecanoyl-1-(9Z-octadecenoyl)-sn-glycero-3-phosphoethanolamine + (9Z)-octadecenoate + H(+)</text>
        <dbReference type="Rhea" id="RHEA:45424"/>
        <dbReference type="ChEBI" id="CHEBI:15377"/>
        <dbReference type="ChEBI" id="CHEBI:15378"/>
        <dbReference type="ChEBI" id="CHEBI:30823"/>
        <dbReference type="ChEBI" id="CHEBI:78097"/>
        <dbReference type="ChEBI" id="CHEBI:85217"/>
    </reaction>
    <physiologicalReaction direction="left-to-right" evidence="2">
        <dbReference type="Rhea" id="RHEA:45425"/>
    </physiologicalReaction>
</comment>
<comment type="catalytic activity">
    <reaction evidence="2">
        <text>1,2-dihexadecanoyl-sn-glycero-3-phospho-(1'-sn-glycerol) + H2O = 1-hexadecanoyl-sn-glycero-3-phospho-(1'-sn-glycerol) + hexadecanoate + H(+)</text>
        <dbReference type="Rhea" id="RHEA:45472"/>
        <dbReference type="ChEBI" id="CHEBI:7896"/>
        <dbReference type="ChEBI" id="CHEBI:15377"/>
        <dbReference type="ChEBI" id="CHEBI:15378"/>
        <dbReference type="ChEBI" id="CHEBI:72829"/>
        <dbReference type="ChEBI" id="CHEBI:75158"/>
    </reaction>
    <physiologicalReaction direction="left-to-right" evidence="2">
        <dbReference type="Rhea" id="RHEA:45473"/>
    </physiologicalReaction>
</comment>
<comment type="catalytic activity">
    <reaction evidence="2">
        <text>1-hexadecanoyl-2-(9Z-octadecenoyl)-sn-glycero-3-phosphoglycerol + H2O = 1-hexadecanoyl-sn-glycero-3-phosphoglycerol + (9Z)-octadecenoate + H(+)</text>
        <dbReference type="Rhea" id="RHEA:44524"/>
        <dbReference type="ChEBI" id="CHEBI:15377"/>
        <dbReference type="ChEBI" id="CHEBI:15378"/>
        <dbReference type="ChEBI" id="CHEBI:30823"/>
        <dbReference type="ChEBI" id="CHEBI:84472"/>
        <dbReference type="ChEBI" id="CHEBI:84475"/>
    </reaction>
    <physiologicalReaction direction="left-to-right" evidence="2">
        <dbReference type="Rhea" id="RHEA:44525"/>
    </physiologicalReaction>
</comment>
<comment type="catalytic activity">
    <reaction evidence="2">
        <text>1-hexadecanoyl-2-(9Z-octadecenoyl)-sn-glycero-3-phospho-(1'-sn-glycerol) + H2O = 1-hexadecanoyl-sn-glycero-3-phospho-(1'-sn-glycerol) + (9Z)-octadecenoate + H(+)</text>
        <dbReference type="Rhea" id="RHEA:40919"/>
        <dbReference type="ChEBI" id="CHEBI:15377"/>
        <dbReference type="ChEBI" id="CHEBI:15378"/>
        <dbReference type="ChEBI" id="CHEBI:30823"/>
        <dbReference type="ChEBI" id="CHEBI:72841"/>
        <dbReference type="ChEBI" id="CHEBI:75158"/>
    </reaction>
    <physiologicalReaction direction="left-to-right" evidence="2">
        <dbReference type="Rhea" id="RHEA:40920"/>
    </physiologicalReaction>
</comment>
<comment type="catalytic activity">
    <reaction evidence="5 6">
        <text>a 1,2-diacyl-sn-glycero-3-phosphocholine + H2O = a 1-acyl-sn-glycero-3-phosphocholine + a fatty acid + H(+)</text>
        <dbReference type="Rhea" id="RHEA:15801"/>
        <dbReference type="ChEBI" id="CHEBI:15377"/>
        <dbReference type="ChEBI" id="CHEBI:15378"/>
        <dbReference type="ChEBI" id="CHEBI:28868"/>
        <dbReference type="ChEBI" id="CHEBI:57643"/>
        <dbReference type="ChEBI" id="CHEBI:58168"/>
        <dbReference type="EC" id="3.1.1.4"/>
    </reaction>
    <physiologicalReaction direction="left-to-right" evidence="2">
        <dbReference type="Rhea" id="RHEA:15802"/>
    </physiologicalReaction>
</comment>
<comment type="catalytic activity">
    <reaction evidence="2">
        <text>1,2-dihexadecanoyl-sn-glycero-3-phosphocholine + H2O = 1-hexadecanoyl-sn-glycero-3-phosphocholine + hexadecanoate + H(+)</text>
        <dbReference type="Rhea" id="RHEA:41223"/>
        <dbReference type="ChEBI" id="CHEBI:7896"/>
        <dbReference type="ChEBI" id="CHEBI:15377"/>
        <dbReference type="ChEBI" id="CHEBI:15378"/>
        <dbReference type="ChEBI" id="CHEBI:72998"/>
        <dbReference type="ChEBI" id="CHEBI:72999"/>
    </reaction>
    <physiologicalReaction direction="left-to-right" evidence="2">
        <dbReference type="Rhea" id="RHEA:41224"/>
    </physiologicalReaction>
</comment>
<comment type="catalytic activity">
    <reaction evidence="2">
        <text>1-hexadecanoyl-2-(9Z-octadecenoyl)-sn-glycero-3-phosphocholine + H2O = 1-hexadecanoyl-sn-glycero-3-phosphocholine + (9Z)-octadecenoate + H(+)</text>
        <dbReference type="Rhea" id="RHEA:38779"/>
        <dbReference type="ChEBI" id="CHEBI:15377"/>
        <dbReference type="ChEBI" id="CHEBI:15378"/>
        <dbReference type="ChEBI" id="CHEBI:30823"/>
        <dbReference type="ChEBI" id="CHEBI:72998"/>
        <dbReference type="ChEBI" id="CHEBI:73001"/>
    </reaction>
    <physiologicalReaction direction="left-to-right" evidence="2">
        <dbReference type="Rhea" id="RHEA:38780"/>
    </physiologicalReaction>
</comment>
<comment type="catalytic activity">
    <reaction evidence="2">
        <text>1-hexadecanoyl-2-(9Z,12Z-octadecadienoyl)-sn-glycero-3-phosphocholine + H2O = (9Z,12Z)-octadecadienoate + 1-hexadecanoyl-sn-glycero-3-phosphocholine + H(+)</text>
        <dbReference type="Rhea" id="RHEA:40811"/>
        <dbReference type="ChEBI" id="CHEBI:15377"/>
        <dbReference type="ChEBI" id="CHEBI:15378"/>
        <dbReference type="ChEBI" id="CHEBI:30245"/>
        <dbReference type="ChEBI" id="CHEBI:72998"/>
        <dbReference type="ChEBI" id="CHEBI:73002"/>
    </reaction>
    <physiologicalReaction direction="left-to-right" evidence="2">
        <dbReference type="Rhea" id="RHEA:40812"/>
    </physiologicalReaction>
</comment>
<comment type="catalytic activity">
    <reaction evidence="2">
        <text>1-hexadecanoyl-2-(4Z,7Z,10Z,13Z,16Z,19Z-docosahexaenoyl)-sn-glycero-3-phosphocholine + H2O = (4Z,7Z,10Z,13Z,16Z,19Z)-docosahexaenoate + 1-hexadecanoyl-sn-glycero-3-phosphocholine + H(+)</text>
        <dbReference type="Rhea" id="RHEA:41231"/>
        <dbReference type="ChEBI" id="CHEBI:15377"/>
        <dbReference type="ChEBI" id="CHEBI:15378"/>
        <dbReference type="ChEBI" id="CHEBI:72998"/>
        <dbReference type="ChEBI" id="CHEBI:74963"/>
        <dbReference type="ChEBI" id="CHEBI:77016"/>
    </reaction>
    <physiologicalReaction direction="left-to-right" evidence="2">
        <dbReference type="Rhea" id="RHEA:41232"/>
    </physiologicalReaction>
</comment>
<comment type="cofactor">
    <cofactor evidence="2">
        <name>Ca(2+)</name>
        <dbReference type="ChEBI" id="CHEBI:29108"/>
    </cofactor>
    <text evidence="2">Binds 1 Ca(2+) ion per subunit.</text>
</comment>
<comment type="subcellular location">
    <subcellularLocation>
        <location evidence="2">Secreted</location>
    </subcellularLocation>
    <subcellularLocation>
        <location evidence="2">Cell membrane</location>
        <topology evidence="2">Peripheral membrane protein</topology>
    </subcellularLocation>
    <subcellularLocation>
        <location evidence="2">Mitochondrion outer membrane</location>
        <topology evidence="2">Peripheral membrane protein</topology>
    </subcellularLocation>
</comment>
<comment type="tissue specificity">
    <text evidence="7">Alveolar macrophages, and at much lower levels in peripheral blood monocytes and peritoneal macrophages.</text>
</comment>
<comment type="similarity">
    <text evidence="8">Belongs to the phospholipase A2 family.</text>
</comment>
<name>PA2GA_CAVPO</name>
<keyword id="KW-0929">Antimicrobial</keyword>
<keyword id="KW-0081">Bacteriolytic enzyme</keyword>
<keyword id="KW-0106">Calcium</keyword>
<keyword id="KW-1003">Cell membrane</keyword>
<keyword id="KW-1015">Disulfide bond</keyword>
<keyword id="KW-0378">Hydrolase</keyword>
<keyword id="KW-0395">Inflammatory response</keyword>
<keyword id="KW-0442">Lipid degradation</keyword>
<keyword id="KW-0443">Lipid metabolism</keyword>
<keyword id="KW-0472">Membrane</keyword>
<keyword id="KW-0479">Metal-binding</keyword>
<keyword id="KW-0496">Mitochondrion</keyword>
<keyword id="KW-1000">Mitochondrion outer membrane</keyword>
<keyword id="KW-1208">Phospholipid metabolism</keyword>
<keyword id="KW-1185">Reference proteome</keyword>
<keyword id="KW-0964">Secreted</keyword>
<keyword id="KW-0732">Signal</keyword>
<organism>
    <name type="scientific">Cavia porcellus</name>
    <name type="common">Guinea pig</name>
    <dbReference type="NCBI Taxonomy" id="10141"/>
    <lineage>
        <taxon>Eukaryota</taxon>
        <taxon>Metazoa</taxon>
        <taxon>Chordata</taxon>
        <taxon>Craniata</taxon>
        <taxon>Vertebrata</taxon>
        <taxon>Euteleostomi</taxon>
        <taxon>Mammalia</taxon>
        <taxon>Eutheria</taxon>
        <taxon>Euarchontoglires</taxon>
        <taxon>Glires</taxon>
        <taxon>Rodentia</taxon>
        <taxon>Hystricomorpha</taxon>
        <taxon>Caviidae</taxon>
        <taxon>Cavia</taxon>
    </lineage>
</organism>
<gene>
    <name type="primary">PLA2G2A</name>
</gene>
<accession>P47711</accession>